<dbReference type="EMBL" id="M22874">
    <property type="protein sequence ID" value="AAA28674.1"/>
    <property type="status" value="ALT_INIT"/>
    <property type="molecule type" value="Genomic_DNA"/>
</dbReference>
<dbReference type="EMBL" id="M38643">
    <property type="protein sequence ID" value="AAA28939.1"/>
    <property type="status" value="ALT_INIT"/>
    <property type="molecule type" value="Genomic_DNA"/>
</dbReference>
<dbReference type="PIR" id="JT0395">
    <property type="entry name" value="JT0395"/>
</dbReference>
<dbReference type="SMR" id="P21330"/>
<dbReference type="FlyBase" id="FBgn0020297">
    <property type="gene designation" value="jockey\gag"/>
</dbReference>
<dbReference type="PRO" id="PR:P21330"/>
<dbReference type="GO" id="GO:0008270">
    <property type="term" value="F:zinc ion binding"/>
    <property type="evidence" value="ECO:0007669"/>
    <property type="project" value="UniProtKB-KW"/>
</dbReference>
<dbReference type="InterPro" id="IPR006579">
    <property type="entry name" value="Pre_C2HC_dom"/>
</dbReference>
<dbReference type="Pfam" id="PF07530">
    <property type="entry name" value="PRE_C2HC"/>
    <property type="match status" value="1"/>
</dbReference>
<dbReference type="SMART" id="SM00596">
    <property type="entry name" value="PRE_C2HC"/>
    <property type="match status" value="1"/>
</dbReference>
<sequence length="568" mass="62878">MENSFAQSRPSNGCDKFEKMRKVAGVEPGELRSQLRASCAVVSPNLEGMPTQSAVSSLMVTISSNTNASVTCTISNVQANMICTPTYTDCTTVTTSICPTTPYDNGLPTPLSSLPNKPSKANCPFQAHDRTVNRKRKGVSQPPLPILTPSPSRKTKRQATMPLNEEASTSTAAALNNNRFALLSAEAENMEQDVSDADSDIEDSAARDGGGQSAKYSKPPAICVPSVSDPVTLERALNLSTGSSNYYIRISRFGVSRIYTANPDAFRTAVKELNKLNCQFWHHQLKEEKPYRVVLKGIHANVPSSQIEQAFSDHGYEVLNIYCPRKSDWKNIQVNEDDNEATKNFKTRQNLFYINLKQGPNVKESLKITRLGRYRVTVERATRRKELLQCQRCQIFGHSKNYCAQDPICGKCSGPHMTGFALCISDVCLCINCGGDHVSTDKSCPVRAEKAKKLKPRSRLPMTNNIATLKPPQRSSSGYIPAEALRTNISYADIARRNTTQSRARATVQAEVIPTSDNSLNNKFMTLDNSIRAINTRMDELFKLIHETVEANKAFRELVQVLITRIPK</sequence>
<feature type="chain" id="PRO_0000087422" description="Nucleic-acid-binding protein from mobile element jockey">
    <location>
        <begin position="1"/>
        <end position="568"/>
    </location>
</feature>
<feature type="zinc finger region" evidence="1">
    <location>
        <begin position="390"/>
        <end position="403"/>
    </location>
</feature>
<feature type="zinc finger region" evidence="1">
    <location>
        <begin position="403"/>
        <end position="423"/>
    </location>
</feature>
<feature type="zinc finger region" evidence="1">
    <location>
        <begin position="430"/>
        <end position="444"/>
    </location>
</feature>
<feature type="region of interest" description="Disordered" evidence="2">
    <location>
        <begin position="128"/>
        <end position="170"/>
    </location>
</feature>
<feature type="region of interest" description="Disordered" evidence="2">
    <location>
        <begin position="189"/>
        <end position="218"/>
    </location>
</feature>
<feature type="region of interest" description="Three zinc-finger-like regions">
    <location>
        <begin position="390"/>
        <end position="444"/>
    </location>
</feature>
<feature type="compositionally biased region" description="Acidic residues" evidence="2">
    <location>
        <begin position="189"/>
        <end position="203"/>
    </location>
</feature>
<reference key="1">
    <citation type="journal article" date="1988" name="Gene">
        <title>The Drosophila mobile element jockey belongs to LINEs and contains coding sequences homologous to some retroviral proteins.</title>
        <authorList>
            <person name="Priimaegi A.F."/>
            <person name="Mizrokhi L.J."/>
            <person name="Ilyin Y.V."/>
        </authorList>
    </citation>
    <scope>NUCLEOTIDE SEQUENCE [GENOMIC DNA]</scope>
</reference>
<reference key="2">
    <citation type="journal article" date="1987" name="Dokl. Akad. Nauk SSSR">
        <title>Drosophila mobile element jockey is a retroposon and encodes the GAG-specific protein sequence characteristic for retroviruses.</title>
        <authorList>
            <person name="Mizrokhi L.J."/>
            <person name="Priimaegi A.F."/>
            <person name="Ilyin Y.V."/>
        </authorList>
    </citation>
    <scope>NUCLEOTIDE SEQUENCE [GENOMIC DNA]</scope>
</reference>
<gene>
    <name type="primary">gag</name>
</gene>
<protein>
    <recommendedName>
        <fullName>Nucleic-acid-binding protein from mobile element jockey</fullName>
    </recommendedName>
    <alternativeName>
        <fullName>ORF1</fullName>
    </alternativeName>
</protein>
<evidence type="ECO:0000255" key="1"/>
<evidence type="ECO:0000256" key="2">
    <source>
        <dbReference type="SAM" id="MobiDB-lite"/>
    </source>
</evidence>
<evidence type="ECO:0000305" key="3"/>
<accession>P21330</accession>
<comment type="function">
    <text>Strongly basic protein that binds directly to retroviral RNA and may be involved in its packaging and in the reverse transcription process.</text>
</comment>
<comment type="sequence caution" evidence="3">
    <conflict type="erroneous initiation">
        <sequence resource="EMBL-CDS" id="AAA28674"/>
    </conflict>
</comment>
<comment type="sequence caution" evidence="3">
    <conflict type="erroneous initiation">
        <sequence resource="EMBL-CDS" id="AAA28939"/>
    </conflict>
</comment>
<organism>
    <name type="scientific">Drosophila melanogaster</name>
    <name type="common">Fruit fly</name>
    <dbReference type="NCBI Taxonomy" id="7227"/>
    <lineage>
        <taxon>Eukaryota</taxon>
        <taxon>Metazoa</taxon>
        <taxon>Ecdysozoa</taxon>
        <taxon>Arthropoda</taxon>
        <taxon>Hexapoda</taxon>
        <taxon>Insecta</taxon>
        <taxon>Pterygota</taxon>
        <taxon>Neoptera</taxon>
        <taxon>Endopterygota</taxon>
        <taxon>Diptera</taxon>
        <taxon>Brachycera</taxon>
        <taxon>Muscomorpha</taxon>
        <taxon>Ephydroidea</taxon>
        <taxon>Drosophilidae</taxon>
        <taxon>Drosophila</taxon>
        <taxon>Sophophora</taxon>
    </lineage>
</organism>
<name>GAGJ_DROME</name>
<proteinExistence type="predicted"/>
<keyword id="KW-0479">Metal-binding</keyword>
<keyword id="KW-0814">Transposable element</keyword>
<keyword id="KW-0862">Zinc</keyword>
<keyword id="KW-0863">Zinc-finger</keyword>